<organism>
    <name type="scientific">Aliarcobacter butzleri (strain RM4018)</name>
    <name type="common">Arcobacter butzleri</name>
    <dbReference type="NCBI Taxonomy" id="367737"/>
    <lineage>
        <taxon>Bacteria</taxon>
        <taxon>Pseudomonadati</taxon>
        <taxon>Campylobacterota</taxon>
        <taxon>Epsilonproteobacteria</taxon>
        <taxon>Campylobacterales</taxon>
        <taxon>Arcobacteraceae</taxon>
        <taxon>Aliarcobacter</taxon>
    </lineage>
</organism>
<protein>
    <recommendedName>
        <fullName evidence="1">Aspartyl/glutamyl-tRNA(Asn/Gln) amidotransferase subunit C</fullName>
        <shortName evidence="1">Asp/Glu-ADT subunit C</shortName>
        <ecNumber evidence="1">6.3.5.-</ecNumber>
    </recommendedName>
</protein>
<name>GATC_ALIB4</name>
<feature type="chain" id="PRO_1000057801" description="Aspartyl/glutamyl-tRNA(Asn/Gln) amidotransferase subunit C">
    <location>
        <begin position="1"/>
        <end position="96"/>
    </location>
</feature>
<evidence type="ECO:0000255" key="1">
    <source>
        <dbReference type="HAMAP-Rule" id="MF_00122"/>
    </source>
</evidence>
<sequence length="96" mass="10827">MTVDDKLIAKLEKLSSLQVDDERKEKLKSELADIINFVENLNDIDVSNIEATFSTIEGGTPLREDTSKQDLELSNHILNHAPKSEDGYFIVPKIIE</sequence>
<reference key="1">
    <citation type="journal article" date="2007" name="PLoS ONE">
        <title>The complete genome sequence and analysis of the Epsilonproteobacterium Arcobacter butzleri.</title>
        <authorList>
            <person name="Miller W.G."/>
            <person name="Parker C.T."/>
            <person name="Rubenfield M."/>
            <person name="Mendz G.L."/>
            <person name="Woesten M.M.S.M."/>
            <person name="Ussery D.W."/>
            <person name="Stolz J.F."/>
            <person name="Binnewies T.T."/>
            <person name="Hallin P.F."/>
            <person name="Wang G."/>
            <person name="Malek J.A."/>
            <person name="Rogosin A."/>
            <person name="Stanker L.H."/>
            <person name="Mandrell R.E."/>
        </authorList>
    </citation>
    <scope>NUCLEOTIDE SEQUENCE [LARGE SCALE GENOMIC DNA]</scope>
    <source>
        <strain>RM4018</strain>
    </source>
</reference>
<accession>A8ERD0</accession>
<keyword id="KW-0067">ATP-binding</keyword>
<keyword id="KW-0436">Ligase</keyword>
<keyword id="KW-0547">Nucleotide-binding</keyword>
<keyword id="KW-0648">Protein biosynthesis</keyword>
<keyword id="KW-1185">Reference proteome</keyword>
<comment type="function">
    <text evidence="1">Allows the formation of correctly charged Asn-tRNA(Asn) or Gln-tRNA(Gln) through the transamidation of misacylated Asp-tRNA(Asn) or Glu-tRNA(Gln) in organisms which lack either or both of asparaginyl-tRNA or glutaminyl-tRNA synthetases. The reaction takes place in the presence of glutamine and ATP through an activated phospho-Asp-tRNA(Asn) or phospho-Glu-tRNA(Gln).</text>
</comment>
<comment type="catalytic activity">
    <reaction evidence="1">
        <text>L-glutamyl-tRNA(Gln) + L-glutamine + ATP + H2O = L-glutaminyl-tRNA(Gln) + L-glutamate + ADP + phosphate + H(+)</text>
        <dbReference type="Rhea" id="RHEA:17521"/>
        <dbReference type="Rhea" id="RHEA-COMP:9681"/>
        <dbReference type="Rhea" id="RHEA-COMP:9684"/>
        <dbReference type="ChEBI" id="CHEBI:15377"/>
        <dbReference type="ChEBI" id="CHEBI:15378"/>
        <dbReference type="ChEBI" id="CHEBI:29985"/>
        <dbReference type="ChEBI" id="CHEBI:30616"/>
        <dbReference type="ChEBI" id="CHEBI:43474"/>
        <dbReference type="ChEBI" id="CHEBI:58359"/>
        <dbReference type="ChEBI" id="CHEBI:78520"/>
        <dbReference type="ChEBI" id="CHEBI:78521"/>
        <dbReference type="ChEBI" id="CHEBI:456216"/>
    </reaction>
</comment>
<comment type="catalytic activity">
    <reaction evidence="1">
        <text>L-aspartyl-tRNA(Asn) + L-glutamine + ATP + H2O = L-asparaginyl-tRNA(Asn) + L-glutamate + ADP + phosphate + 2 H(+)</text>
        <dbReference type="Rhea" id="RHEA:14513"/>
        <dbReference type="Rhea" id="RHEA-COMP:9674"/>
        <dbReference type="Rhea" id="RHEA-COMP:9677"/>
        <dbReference type="ChEBI" id="CHEBI:15377"/>
        <dbReference type="ChEBI" id="CHEBI:15378"/>
        <dbReference type="ChEBI" id="CHEBI:29985"/>
        <dbReference type="ChEBI" id="CHEBI:30616"/>
        <dbReference type="ChEBI" id="CHEBI:43474"/>
        <dbReference type="ChEBI" id="CHEBI:58359"/>
        <dbReference type="ChEBI" id="CHEBI:78515"/>
        <dbReference type="ChEBI" id="CHEBI:78516"/>
        <dbReference type="ChEBI" id="CHEBI:456216"/>
    </reaction>
</comment>
<comment type="subunit">
    <text evidence="1">Heterotrimer of A, B and C subunits.</text>
</comment>
<comment type="similarity">
    <text evidence="1">Belongs to the GatC family.</text>
</comment>
<dbReference type="EC" id="6.3.5.-" evidence="1"/>
<dbReference type="EMBL" id="CP000361">
    <property type="protein sequence ID" value="ABV66504.1"/>
    <property type="molecule type" value="Genomic_DNA"/>
</dbReference>
<dbReference type="RefSeq" id="WP_004510283.1">
    <property type="nucleotide sequence ID" value="NC_009850.1"/>
</dbReference>
<dbReference type="SMR" id="A8ERD0"/>
<dbReference type="STRING" id="367737.Abu_0229"/>
<dbReference type="GeneID" id="24303718"/>
<dbReference type="KEGG" id="abu:Abu_0229"/>
<dbReference type="eggNOG" id="COG0721">
    <property type="taxonomic scope" value="Bacteria"/>
</dbReference>
<dbReference type="HOGENOM" id="CLU_105899_2_1_7"/>
<dbReference type="Proteomes" id="UP000001136">
    <property type="component" value="Chromosome"/>
</dbReference>
<dbReference type="GO" id="GO:0050566">
    <property type="term" value="F:asparaginyl-tRNA synthase (glutamine-hydrolyzing) activity"/>
    <property type="evidence" value="ECO:0007669"/>
    <property type="project" value="RHEA"/>
</dbReference>
<dbReference type="GO" id="GO:0005524">
    <property type="term" value="F:ATP binding"/>
    <property type="evidence" value="ECO:0007669"/>
    <property type="project" value="UniProtKB-KW"/>
</dbReference>
<dbReference type="GO" id="GO:0050567">
    <property type="term" value="F:glutaminyl-tRNA synthase (glutamine-hydrolyzing) activity"/>
    <property type="evidence" value="ECO:0007669"/>
    <property type="project" value="UniProtKB-UniRule"/>
</dbReference>
<dbReference type="GO" id="GO:0070681">
    <property type="term" value="P:glutaminyl-tRNAGln biosynthesis via transamidation"/>
    <property type="evidence" value="ECO:0007669"/>
    <property type="project" value="TreeGrafter"/>
</dbReference>
<dbReference type="GO" id="GO:0006450">
    <property type="term" value="P:regulation of translational fidelity"/>
    <property type="evidence" value="ECO:0007669"/>
    <property type="project" value="InterPro"/>
</dbReference>
<dbReference type="GO" id="GO:0006412">
    <property type="term" value="P:translation"/>
    <property type="evidence" value="ECO:0007669"/>
    <property type="project" value="UniProtKB-UniRule"/>
</dbReference>
<dbReference type="Gene3D" id="1.10.20.60">
    <property type="entry name" value="Glu-tRNAGln amidotransferase C subunit, N-terminal domain"/>
    <property type="match status" value="1"/>
</dbReference>
<dbReference type="HAMAP" id="MF_00122">
    <property type="entry name" value="GatC"/>
    <property type="match status" value="1"/>
</dbReference>
<dbReference type="InterPro" id="IPR036113">
    <property type="entry name" value="Asp/Glu-ADT_sf_sub_c"/>
</dbReference>
<dbReference type="InterPro" id="IPR003837">
    <property type="entry name" value="GatC"/>
</dbReference>
<dbReference type="NCBIfam" id="TIGR00135">
    <property type="entry name" value="gatC"/>
    <property type="match status" value="1"/>
</dbReference>
<dbReference type="PANTHER" id="PTHR15004">
    <property type="entry name" value="GLUTAMYL-TRNA(GLN) AMIDOTRANSFERASE SUBUNIT C, MITOCHONDRIAL"/>
    <property type="match status" value="1"/>
</dbReference>
<dbReference type="PANTHER" id="PTHR15004:SF0">
    <property type="entry name" value="GLUTAMYL-TRNA(GLN) AMIDOTRANSFERASE SUBUNIT C, MITOCHONDRIAL"/>
    <property type="match status" value="1"/>
</dbReference>
<dbReference type="Pfam" id="PF02686">
    <property type="entry name" value="GatC"/>
    <property type="match status" value="1"/>
</dbReference>
<dbReference type="SUPFAM" id="SSF141000">
    <property type="entry name" value="Glu-tRNAGln amidotransferase C subunit"/>
    <property type="match status" value="1"/>
</dbReference>
<proteinExistence type="inferred from homology"/>
<gene>
    <name evidence="1" type="primary">gatC</name>
    <name type="ordered locus">Abu_0229</name>
</gene>